<reference key="1">
    <citation type="journal article" date="1992" name="Genetics">
        <title>Interspecific comparison of the transformer gene of Drosophila reveals an unusually high degree of evolutionary divergence.</title>
        <authorList>
            <person name="O'Neil M.T."/>
            <person name="Belote J.M."/>
        </authorList>
    </citation>
    <scope>NUCLEOTIDE SEQUENCE [GENOMIC DNA]</scope>
    <scope>FUNCTION</scope>
</reference>
<name>TRSF_DROSI</name>
<dbReference type="EMBL" id="X66930">
    <property type="protein sequence ID" value="CAA47364.1"/>
    <property type="molecule type" value="Genomic_DNA"/>
</dbReference>
<dbReference type="PIR" id="S26046">
    <property type="entry name" value="S26046"/>
</dbReference>
<dbReference type="OrthoDB" id="7871011at2759"/>
<dbReference type="GO" id="GO:0016607">
    <property type="term" value="C:nuclear speck"/>
    <property type="evidence" value="ECO:0007669"/>
    <property type="project" value="UniProtKB-SubCell"/>
</dbReference>
<dbReference type="GO" id="GO:0036002">
    <property type="term" value="F:pre-mRNA binding"/>
    <property type="evidence" value="ECO:0007669"/>
    <property type="project" value="EnsemblMetazoa"/>
</dbReference>
<dbReference type="GO" id="GO:0030154">
    <property type="term" value="P:cell differentiation"/>
    <property type="evidence" value="ECO:0007669"/>
    <property type="project" value="UniProtKB-KW"/>
</dbReference>
<dbReference type="GO" id="GO:1990399">
    <property type="term" value="P:epithelium regeneration"/>
    <property type="evidence" value="ECO:0007669"/>
    <property type="project" value="EnsemblMetazoa"/>
</dbReference>
<dbReference type="GO" id="GO:0030237">
    <property type="term" value="P:female sex determination"/>
    <property type="evidence" value="ECO:0007669"/>
    <property type="project" value="EnsemblMetazoa"/>
</dbReference>
<dbReference type="GO" id="GO:0046660">
    <property type="term" value="P:female sex differentiation"/>
    <property type="evidence" value="ECO:0007669"/>
    <property type="project" value="EnsemblMetazoa"/>
</dbReference>
<dbReference type="GO" id="GO:0000398">
    <property type="term" value="P:mRNA splicing, via spliceosome"/>
    <property type="evidence" value="ECO:0007669"/>
    <property type="project" value="EnsemblMetazoa"/>
</dbReference>
<dbReference type="GO" id="GO:2000035">
    <property type="term" value="P:regulation of stem cell division"/>
    <property type="evidence" value="ECO:0007669"/>
    <property type="project" value="EnsemblMetazoa"/>
</dbReference>
<dbReference type="InterPro" id="IPR010519">
    <property type="entry name" value="Tra"/>
</dbReference>
<dbReference type="Pfam" id="PF06495">
    <property type="entry name" value="Transformer"/>
    <property type="match status" value="1"/>
</dbReference>
<gene>
    <name type="primary">tra</name>
</gene>
<organism>
    <name type="scientific">Drosophila simulans</name>
    <name type="common">Fruit fly</name>
    <dbReference type="NCBI Taxonomy" id="7240"/>
    <lineage>
        <taxon>Eukaryota</taxon>
        <taxon>Metazoa</taxon>
        <taxon>Ecdysozoa</taxon>
        <taxon>Arthropoda</taxon>
        <taxon>Hexapoda</taxon>
        <taxon>Insecta</taxon>
        <taxon>Pterygota</taxon>
        <taxon>Neoptera</taxon>
        <taxon>Endopterygota</taxon>
        <taxon>Diptera</taxon>
        <taxon>Brachycera</taxon>
        <taxon>Muscomorpha</taxon>
        <taxon>Ephydroidea</taxon>
        <taxon>Drosophilidae</taxon>
        <taxon>Drosophila</taxon>
        <taxon>Sophophora</taxon>
    </lineage>
</organism>
<feature type="chain" id="PRO_0000065646" description="Female-specific protein transformer">
    <location>
        <begin position="1"/>
        <end position="184"/>
    </location>
</feature>
<feature type="region of interest" description="Disordered" evidence="2">
    <location>
        <begin position="1"/>
        <end position="123"/>
    </location>
</feature>
<feature type="region of interest" description="Disordered" evidence="2">
    <location>
        <begin position="146"/>
        <end position="184"/>
    </location>
</feature>
<feature type="compositionally biased region" description="Basic and acidic residues" evidence="2">
    <location>
        <begin position="1"/>
        <end position="39"/>
    </location>
</feature>
<feature type="compositionally biased region" description="Basic and acidic residues" evidence="2">
    <location>
        <begin position="49"/>
        <end position="58"/>
    </location>
</feature>
<feature type="compositionally biased region" description="Basic residues" evidence="2">
    <location>
        <begin position="59"/>
        <end position="75"/>
    </location>
</feature>
<feature type="compositionally biased region" description="Basic residues" evidence="2">
    <location>
        <begin position="84"/>
        <end position="114"/>
    </location>
</feature>
<feature type="compositionally biased region" description="Pro residues" evidence="2">
    <location>
        <begin position="150"/>
        <end position="159"/>
    </location>
</feature>
<protein>
    <recommendedName>
        <fullName>Female-specific protein transformer</fullName>
    </recommendedName>
</protein>
<sequence length="184" mass="22386">MKMDADSSGTEHRDSRGSRSRSWREREHHGRTSERDSRKKEHKIPYFADEVREQDRIRSLRQRAHQSTRRTRSRSRSQSSDRGSRHRRHRQRSRSRNRSRSRSSERRRRQRSPHRYNPPPKIINYYVQVPPQDFYGMPGMRQSFGYQRLPRPPPFPPAPFRYRQRQPFMGAPRFGYRNAGRPPY</sequence>
<comment type="function">
    <text evidence="3">Member of the regulatory pathway controlling female somatic sexual differentiation, regulated by Sxl. Activates dsx female-specific splicing by promoting the formation of a splicing enhancer complex which consists of tra, tra2 and sr proteins.</text>
</comment>
<comment type="subcellular location">
    <subcellularLocation>
        <location evidence="1">Nucleus speckle</location>
    </subcellularLocation>
    <text evidence="1">Speckled subnuclear compartment.</text>
</comment>
<comment type="domain">
    <text evidence="1">RS domain directs localization of proteins to the speckled subnuclear compartment and the purpose of this localization is to allow colocalization and co-concentration of components of the splicing and splicing regulatory machinery to permit relatively high rates and/or efficiencies of reaction and interaction.</text>
</comment>
<comment type="miscellaneous">
    <text>The sexual regulation of tra occurs through a mechanism of sex-specific alternative RNA splicing. The non-sex-specific RNA expressed in males is not translated.</text>
</comment>
<comment type="caution">
    <text evidence="4">It is uncertain whether Met-1 or Met-3 is the initiator.</text>
</comment>
<proteinExistence type="inferred from homology"/>
<keyword id="KW-0221">Differentiation</keyword>
<keyword id="KW-0539">Nucleus</keyword>
<keyword id="KW-0726">Sexual differentiation</keyword>
<evidence type="ECO:0000250" key="1"/>
<evidence type="ECO:0000256" key="2">
    <source>
        <dbReference type="SAM" id="MobiDB-lite"/>
    </source>
</evidence>
<evidence type="ECO:0000269" key="3">
    <source>
    </source>
</evidence>
<evidence type="ECO:0000305" key="4"/>
<accession>Q24669</accession>